<comment type="function">
    <text evidence="2 4 5 6">A potent antigen in animals immunized with live bacteria, it induces a strong delayed-type hypersensitivity (DTH) in immunized animals (PubMed:10531201). Elicits a mostly Th1 type of T-cell response in healthy humans; induces IFN-gamma production from CD4(+) and CD8(+) cells (PubMed:12654810). Functions as an adhesin, binds to mouse macrophages via mannose residues (PubMed:10531201, PubMed:25359607). Might interact via host CD209 (PubMed:16092920).</text>
</comment>
<comment type="subcellular location">
    <subcellularLocation>
        <location evidence="2">Secreted</location>
    </subcellularLocation>
    <subcellularLocation>
        <location evidence="6">Cell surface</location>
    </subcellularLocation>
</comment>
<comment type="PTM">
    <text evidence="2 3 6 7 10">Glycosylated, with mannose residues (PubMed:10531201, PubMed:10542234, PubMed:25359607, PubMed:8626314). The secreted protein has from 0 to 9 mannose residues, the majority have 6, 7, or 8 mannose residues (22, 24 and 17% respectively) (PubMed:10531201). Deglycosylated molecules had a significantly lower capacity to elicit a DTH reaction in guinea pigs in vivo or to activate specific T lymphocytes in vitro (PubMed:10531201). Pretreating mouse macrophages with mannan decreases binding of M.tuberculosis (PubMed:25359607). The non-glycosylated form stimulates IFN-gamma production however, so glycosylation is not essential (PubMed:12654810).</text>
</comment>
<comment type="PTM">
    <text evidence="2">Runs as 45 and 47 kDa protein, the nature of the difference between the 2 forms is not known but is still seen after alpha-mannosidase treatment (PubMed:10531201).</text>
</comment>
<comment type="mass spectrometry" mass="28782.0" error="1.6" method="Electrospray" evidence="2">
    <text>Chemically or enzymatically deglycosylated protein.</text>
</comment>
<comment type="biotechnology">
    <text evidence="2 3 4">Major immunodominant antigen that has potential as a vaccine against tuberculosis (PubMed:10531201, PubMed:10542234, PubMed:12654810). Can be used as a DNA vaccine in guinea pigs (PubMed:12654810). Apa-ELISA could be used in diagnosis.</text>
</comment>
<comment type="similarity">
    <text evidence="9">Belongs to the Apa family.</text>
</comment>
<comment type="caution">
    <text evidence="9">Was originally thought to be involved in molybdenum transport.</text>
</comment>
<name>APA_MYCTU</name>
<organism>
    <name type="scientific">Mycobacterium tuberculosis (strain ATCC 25618 / H37Rv)</name>
    <dbReference type="NCBI Taxonomy" id="83332"/>
    <lineage>
        <taxon>Bacteria</taxon>
        <taxon>Bacillati</taxon>
        <taxon>Actinomycetota</taxon>
        <taxon>Actinomycetes</taxon>
        <taxon>Mycobacteriales</taxon>
        <taxon>Mycobacteriaceae</taxon>
        <taxon>Mycobacterium</taxon>
        <taxon>Mycobacterium tuberculosis complex</taxon>
    </lineage>
</organism>
<protein>
    <recommendedName>
        <fullName>Alanine and proline-rich secreted protein Apa</fullName>
    </recommendedName>
    <alternativeName>
        <fullName>45 kDa glycoprotein</fullName>
    </alternativeName>
    <alternativeName>
        <fullName evidence="8">45/47 kDa antigen</fullName>
    </alternativeName>
    <alternativeName>
        <fullName>Antigen MPT-32</fullName>
    </alternativeName>
    <alternativeName>
        <fullName>FAP-B</fullName>
    </alternativeName>
    <alternativeName>
        <fullName>Fibronectin attachment protein</fullName>
    </alternativeName>
    <alternativeName>
        <fullName>Immunogenic protein MPT32</fullName>
    </alternativeName>
</protein>
<gene>
    <name type="primary">apa</name>
    <name type="synonym">modD</name>
    <name type="ordered locus">Rv1860</name>
    <name type="ORF">MTCY359.13</name>
</gene>
<sequence length="325" mass="32721">MHQVDPNLTRRKGRLAALAIAAMASASLVTVAVPATANADPEPAPPVPTTAASPPSTAAAPPAPATPVAPPPPAAANTPNAQPGDPNAAPPPADPNAPPPPVIAPNAPQPVRIDNPVGGFSFALPAGWVESDAAHFDYGSALLSKTTGDPPFPGQPPPVANDTRIVLGRLDQKLYASAEATDSKAAARLGSDMGEFYMPYPGTRINQETVSLDANGVSGSASYYEVKFSDPSKPNGQIWTGVIGSPAANAPDAGPPQRWFVVWLGTANNPVDKGAAKALAESIRPLVAPPPAPAPAPAEPAPAPAPAGEVAPTPTTPTPQRTLPA</sequence>
<accession>P9WIR7</accession>
<accession>L0T9G7</accession>
<accession>O08062</accession>
<accession>Q50906</accession>
<reference key="1">
    <citation type="journal article" date="1995" name="Infect. Immun.">
        <title>Cloning, sequencing, and expression of the apa gene coding for the Mycobacterium tuberculosis 45/47-kilodalton secreted antigen complex.</title>
        <authorList>
            <person name="Laqueyrerie A."/>
            <person name="Militzer P."/>
            <person name="Romain F."/>
            <person name="Eiglmeier K."/>
            <person name="Cole S."/>
            <person name="Marchel G."/>
        </authorList>
    </citation>
    <scope>NUCLEOTIDE SEQUENCE [GENOMIC DNA]</scope>
    <source>
        <strain>ATCC 25618 / H37Rv</strain>
    </source>
</reference>
<reference key="2">
    <citation type="submission" date="1997-03" db="EMBL/GenBank/DDBJ databases">
        <authorList>
            <person name="Laqueyrerie A."/>
        </authorList>
    </citation>
    <scope>NUCLEOTIDE SEQUENCE [GENOMIC DNA]</scope>
    <source>
        <strain>ATCC 25618 / H37Rv</strain>
    </source>
</reference>
<reference key="3">
    <citation type="journal article" date="1998" name="Nature">
        <title>Deciphering the biology of Mycobacterium tuberculosis from the complete genome sequence.</title>
        <authorList>
            <person name="Cole S.T."/>
            <person name="Brosch R."/>
            <person name="Parkhill J."/>
            <person name="Garnier T."/>
            <person name="Churcher C.M."/>
            <person name="Harris D.E."/>
            <person name="Gordon S.V."/>
            <person name="Eiglmeier K."/>
            <person name="Gas S."/>
            <person name="Barry C.E. III"/>
            <person name="Tekaia F."/>
            <person name="Badcock K."/>
            <person name="Basham D."/>
            <person name="Brown D."/>
            <person name="Chillingworth T."/>
            <person name="Connor R."/>
            <person name="Davies R.M."/>
            <person name="Devlin K."/>
            <person name="Feltwell T."/>
            <person name="Gentles S."/>
            <person name="Hamlin N."/>
            <person name="Holroyd S."/>
            <person name="Hornsby T."/>
            <person name="Jagels K."/>
            <person name="Krogh A."/>
            <person name="McLean J."/>
            <person name="Moule S."/>
            <person name="Murphy L.D."/>
            <person name="Oliver S."/>
            <person name="Osborne J."/>
            <person name="Quail M.A."/>
            <person name="Rajandream M.A."/>
            <person name="Rogers J."/>
            <person name="Rutter S."/>
            <person name="Seeger K."/>
            <person name="Skelton S."/>
            <person name="Squares S."/>
            <person name="Squares R."/>
            <person name="Sulston J.E."/>
            <person name="Taylor K."/>
            <person name="Whitehead S."/>
            <person name="Barrell B.G."/>
        </authorList>
    </citation>
    <scope>NUCLEOTIDE SEQUENCE [LARGE SCALE GENOMIC DNA]</scope>
    <source>
        <strain>ATCC 25618 / H37Rv</strain>
    </source>
</reference>
<reference key="4">
    <citation type="journal article" date="1991" name="Infect. Immun.">
        <title>Isolation and partial characterization of major protein antigens in the culture fluid of Mycobacterium tuberculosis.</title>
        <authorList>
            <person name="Nagai S."/>
            <person name="Wiker H.G."/>
            <person name="Harboe M."/>
            <person name="Kinomoto M."/>
        </authorList>
    </citation>
    <scope>PARTIAL PROTEIN SEQUENCE</scope>
    <scope>CHARACTERIZATION</scope>
</reference>
<reference key="5">
    <citation type="journal article" date="1995" name="Infect. Immun.">
        <title>Evidence for glycosylation sites on the 45-kilodalton glycoprotein of Mycobacterium tuberculosis.</title>
        <authorList>
            <person name="Dobos K.M."/>
            <person name="Swiderek K."/>
            <person name="Khoo K.-H."/>
            <person name="Brennan P.J."/>
            <person name="Belisle J.T."/>
        </authorList>
    </citation>
    <scope>PARTIAL PROTEIN SEQUENCE</scope>
    <scope>GLYCOSYLATION</scope>
</reference>
<reference key="6">
    <citation type="journal article" date="1996" name="J. Bacteriol.">
        <title>Definition of the full extent of glycosylation of the 45-kilodalton glycoprotein of Mycobacterium tuberculosis.</title>
        <authorList>
            <person name="Dobos K.M."/>
            <person name="Khoo K.-H."/>
            <person name="Swiderek K.M."/>
            <person name="Brennan P.J."/>
            <person name="Belisle J.T."/>
        </authorList>
    </citation>
    <scope>PARTIAL PROTEIN SEQUENCE</scope>
    <scope>GLYCOSYLATION AT THR-49; THR-57; THR-66 AND THR-316</scope>
    <scope>STRUCTURE OF CARBOHYDRATE</scope>
</reference>
<reference key="7">
    <citation type="journal article" date="1999" name="J. Biol. Chem.">
        <title>Decreased capacity of recombinant 45/47-kDa molecules (Apa) of Mycobacterium tuberculosis to stimulate T lymphocyte responses related to changes in their mannosylation pattern.</title>
        <authorList>
            <person name="Horn C."/>
            <person name="Namane A."/>
            <person name="Pescher P."/>
            <person name="Riviere M."/>
            <person name="Romain F."/>
            <person name="Puzo G."/>
            <person name="Barzu O."/>
            <person name="Marchal G."/>
        </authorList>
    </citation>
    <scope>PROTEIN SEQUENCE OF 40-49</scope>
    <scope>CHARACTERIZATION OF GLYCOSYLATION BY MASS SPECTROMETRY</scope>
    <scope>BIOTECHNOLOGY</scope>
    <source>
        <strain>ATCC 25618 / H37Rv</strain>
    </source>
</reference>
<reference key="8">
    <citation type="journal article" date="1999" name="Infect. Immun.">
        <title>Deglycosylation of the 45/47-kilodalton antigen complex of Mycobacterium tuberculosis decreases its capacity to elicit in vivo or in vitro cellular immune responses.</title>
        <authorList>
            <person name="Romain F."/>
            <person name="Horn C."/>
            <person name="Pescher P."/>
            <person name="Namane A."/>
            <person name="Riviere M."/>
            <person name="Puzo G."/>
            <person name="Barzu O."/>
            <person name="Marchal G."/>
        </authorList>
    </citation>
    <scope>PROTEIN SEQUENCE OF 40-57</scope>
    <scope>FUNCTION</scope>
    <scope>CHARACTERIZATION OF GLYCOSYLATION BY MASS SPECTROMETRY</scope>
    <scope>BIOTECHNOLOGY</scope>
    <source>
        <strain>ATCC 25618 / H37Rv</strain>
    </source>
</reference>
<reference key="9">
    <citation type="journal article" date="2003" name="Infect. Immun.">
        <title>The Apa protein of Mycobacterium tuberculosis stimulates gamma interferon-secreting CD4+ and CD8+ T cells from purified protein derivative-positive individuals and affords protection in a guinea pig model.</title>
        <authorList>
            <person name="Kumar P."/>
            <person name="Amara R.R."/>
            <person name="Challu V.K."/>
            <person name="Chadda V.K."/>
            <person name="Satchidanandam V."/>
        </authorList>
    </citation>
    <scope>FUNCTION</scope>
    <scope>BIOTECHNOLOGY</scope>
    <source>
        <strain>ATCC 25618 / H37Rv</strain>
    </source>
</reference>
<reference key="10">
    <citation type="journal article" date="2005" name="Biochem. J.">
        <title>Deciphering the molecular bases of Mycobacterium tuberculosis binding to the lectin DC-SIGN reveals an underestimated complexity.</title>
        <authorList>
            <person name="Pitarque S."/>
            <person name="Herrmann J.L."/>
            <person name="Duteyrat J.L."/>
            <person name="Jackson M."/>
            <person name="Stewart G.R."/>
            <person name="Lecointe F."/>
            <person name="Payre B."/>
            <person name="Schwartz O."/>
            <person name="Young D.B."/>
            <person name="Marchal G."/>
            <person name="Lagrange P.H."/>
            <person name="Puzo G."/>
            <person name="Gicquel B."/>
            <person name="Nigou J."/>
            <person name="Neyrolles O."/>
        </authorList>
    </citation>
    <scope>FUNCTION</scope>
    <source>
        <strain>ATCC 25618 / H37Rv</strain>
    </source>
</reference>
<reference key="11">
    <citation type="journal article" date="2011" name="Mol. Cell. Proteomics">
        <title>Proteogenomic analysis of Mycobacterium tuberculosis by high resolution mass spectrometry.</title>
        <authorList>
            <person name="Kelkar D.S."/>
            <person name="Kumar D."/>
            <person name="Kumar P."/>
            <person name="Balakrishnan L."/>
            <person name="Muthusamy B."/>
            <person name="Yadav A.K."/>
            <person name="Shrivastava P."/>
            <person name="Marimuthu A."/>
            <person name="Anand S."/>
            <person name="Sundaram H."/>
            <person name="Kingsbury R."/>
            <person name="Harsha H.C."/>
            <person name="Nair B."/>
            <person name="Prasad T.S."/>
            <person name="Chauhan D.S."/>
            <person name="Katoch K."/>
            <person name="Katoch V.M."/>
            <person name="Kumar P."/>
            <person name="Chaerkady R."/>
            <person name="Ramachandran S."/>
            <person name="Dash D."/>
            <person name="Pandey A."/>
        </authorList>
    </citation>
    <scope>IDENTIFICATION BY MASS SPECTROMETRY [LARGE SCALE ANALYSIS]</scope>
    <source>
        <strain>ATCC 25618 / H37Rv</strain>
    </source>
</reference>
<reference key="12">
    <citation type="journal article" date="2015" name="Scand. J. Immunol.">
        <title>PstS-1, the 38-kDa Mycobacterium tuberculosis glycoprotein, is an adhesin, which binds the macrophage mannose receptor and promotes phagocytosis.</title>
        <authorList>
            <person name="Esparza M."/>
            <person name="Palomares B."/>
            <person name="Garcia T."/>
            <person name="Espinosa P."/>
            <person name="Zenteno E."/>
            <person name="Mancilla R."/>
        </authorList>
    </citation>
    <scope>FUNCTION</scope>
    <scope>SUBCELLULAR LOCATION</scope>
    <scope>GLYCOSYLATION</scope>
    <source>
        <strain>H37Rv</strain>
    </source>
</reference>
<proteinExistence type="evidence at protein level"/>
<feature type="signal peptide" evidence="2 3">
    <location>
        <begin position="1"/>
        <end position="39"/>
    </location>
</feature>
<feature type="chain" id="PRO_0000020745" description="Alanine and proline-rich secreted protein Apa">
    <location>
        <begin position="40"/>
        <end position="325"/>
    </location>
</feature>
<feature type="repeat" description="1">
    <location>
        <begin position="85"/>
        <end position="88"/>
    </location>
</feature>
<feature type="repeat" description="2">
    <location>
        <begin position="94"/>
        <end position="97"/>
    </location>
</feature>
<feature type="repeat" description="3">
    <location>
        <begin position="104"/>
        <end position="107"/>
    </location>
</feature>
<feature type="region of interest" description="Disordered" evidence="1">
    <location>
        <begin position="38"/>
        <end position="110"/>
    </location>
</feature>
<feature type="region of interest" description="3 X 4 AA approximate repeats of [DA]-P-N-A">
    <location>
        <begin position="85"/>
        <end position="107"/>
    </location>
</feature>
<feature type="region of interest" description="Disordered" evidence="1">
    <location>
        <begin position="286"/>
        <end position="325"/>
    </location>
</feature>
<feature type="compositionally biased region" description="Low complexity" evidence="1">
    <location>
        <begin position="49"/>
        <end position="60"/>
    </location>
</feature>
<feature type="compositionally biased region" description="Pro residues" evidence="1">
    <location>
        <begin position="61"/>
        <end position="74"/>
    </location>
</feature>
<feature type="compositionally biased region" description="Low complexity" evidence="1">
    <location>
        <begin position="75"/>
        <end position="87"/>
    </location>
</feature>
<feature type="compositionally biased region" description="Pro residues" evidence="1">
    <location>
        <begin position="88"/>
        <end position="103"/>
    </location>
</feature>
<feature type="compositionally biased region" description="Pro residues" evidence="1">
    <location>
        <begin position="287"/>
        <end position="305"/>
    </location>
</feature>
<feature type="compositionally biased region" description="Low complexity" evidence="1">
    <location>
        <begin position="306"/>
        <end position="325"/>
    </location>
</feature>
<feature type="glycosylation site" description="O-linked (Man...) threonine" evidence="7">
    <location>
        <position position="49"/>
    </location>
</feature>
<feature type="glycosylation site" description="O-linked (Man...) threonine" evidence="7">
    <location>
        <position position="57"/>
    </location>
</feature>
<feature type="glycosylation site" description="O-linked (Man) threonine" evidence="7">
    <location>
        <position position="66"/>
    </location>
</feature>
<feature type="glycosylation site" description="O-linked (Man...) threonine" evidence="7">
    <location>
        <position position="316"/>
    </location>
</feature>
<feature type="strand" evidence="11">
    <location>
        <begin position="112"/>
        <end position="115"/>
    </location>
</feature>
<feature type="turn" evidence="11">
    <location>
        <begin position="116"/>
        <end position="119"/>
    </location>
</feature>
<feature type="strand" evidence="11">
    <location>
        <begin position="120"/>
        <end position="123"/>
    </location>
</feature>
<feature type="strand" evidence="11">
    <location>
        <begin position="128"/>
        <end position="131"/>
    </location>
</feature>
<feature type="helix" evidence="11">
    <location>
        <begin position="133"/>
        <end position="138"/>
    </location>
</feature>
<feature type="strand" evidence="11">
    <location>
        <begin position="140"/>
        <end position="146"/>
    </location>
</feature>
<feature type="strand" evidence="11">
    <location>
        <begin position="164"/>
        <end position="169"/>
    </location>
</feature>
<feature type="helix" evidence="11">
    <location>
        <begin position="182"/>
        <end position="197"/>
    </location>
</feature>
<feature type="strand" evidence="11">
    <location>
        <begin position="202"/>
        <end position="214"/>
    </location>
</feature>
<feature type="strand" evidence="11">
    <location>
        <begin position="217"/>
        <end position="230"/>
    </location>
</feature>
<feature type="strand" evidence="11">
    <location>
        <begin position="236"/>
        <end position="244"/>
    </location>
</feature>
<feature type="strand" evidence="11">
    <location>
        <begin position="258"/>
        <end position="269"/>
    </location>
</feature>
<feature type="helix" evidence="11">
    <location>
        <begin position="273"/>
        <end position="281"/>
    </location>
</feature>
<keyword id="KW-0002">3D-structure</keyword>
<keyword id="KW-0903">Direct protein sequencing</keyword>
<keyword id="KW-0325">Glycoprotein</keyword>
<keyword id="KW-1185">Reference proteome</keyword>
<keyword id="KW-0677">Repeat</keyword>
<keyword id="KW-0964">Secreted</keyword>
<keyword id="KW-0732">Signal</keyword>
<dbReference type="EMBL" id="X80268">
    <property type="protein sequence ID" value="CAA56555.1"/>
    <property type="molecule type" value="Genomic_DNA"/>
</dbReference>
<dbReference type="EMBL" id="X99258">
    <property type="protein sequence ID" value="CAA67645.1"/>
    <property type="molecule type" value="Genomic_DNA"/>
</dbReference>
<dbReference type="EMBL" id="AL123456">
    <property type="protein sequence ID" value="CCP44626.1"/>
    <property type="molecule type" value="Genomic_DNA"/>
</dbReference>
<dbReference type="PIR" id="D70666">
    <property type="entry name" value="D70666"/>
</dbReference>
<dbReference type="RefSeq" id="WP_003911690.1">
    <property type="nucleotide sequence ID" value="NZ_NVQJ01000013.1"/>
</dbReference>
<dbReference type="RefSeq" id="YP_177849.1">
    <property type="nucleotide sequence ID" value="NC_000962.3"/>
</dbReference>
<dbReference type="PDB" id="5ZX9">
    <property type="method" value="X-ray"/>
    <property type="resolution" value="1.55 A"/>
    <property type="chains" value="A=1-325"/>
</dbReference>
<dbReference type="PDB" id="5ZXA">
    <property type="method" value="X-ray"/>
    <property type="resolution" value="1.77 A"/>
    <property type="chains" value="A=1-325"/>
</dbReference>
<dbReference type="PDBsum" id="5ZX9"/>
<dbReference type="PDBsum" id="5ZXA"/>
<dbReference type="SMR" id="P9WIR7"/>
<dbReference type="STRING" id="83332.Rv1860"/>
<dbReference type="GlyCosmos" id="P9WIR7">
    <property type="glycosylation" value="4 sites, No reported glycans"/>
</dbReference>
<dbReference type="iPTMnet" id="P9WIR7"/>
<dbReference type="PaxDb" id="83332-Rv1860"/>
<dbReference type="GeneID" id="885896"/>
<dbReference type="KEGG" id="mtu:Rv1860"/>
<dbReference type="KEGG" id="mtv:RVBD_1860"/>
<dbReference type="TubercuList" id="Rv1860"/>
<dbReference type="eggNOG" id="ENOG50346X3">
    <property type="taxonomic scope" value="Bacteria"/>
</dbReference>
<dbReference type="InParanoid" id="P9WIR7"/>
<dbReference type="OrthoDB" id="4578857at2"/>
<dbReference type="Proteomes" id="UP000001584">
    <property type="component" value="Chromosome"/>
</dbReference>
<dbReference type="GO" id="GO:0009986">
    <property type="term" value="C:cell surface"/>
    <property type="evidence" value="ECO:0007669"/>
    <property type="project" value="UniProtKB-SubCell"/>
</dbReference>
<dbReference type="GO" id="GO:0005576">
    <property type="term" value="C:extracellular region"/>
    <property type="evidence" value="ECO:0007005"/>
    <property type="project" value="MTBBASE"/>
</dbReference>
<dbReference type="GO" id="GO:0050840">
    <property type="term" value="F:extracellular matrix binding"/>
    <property type="evidence" value="ECO:0007669"/>
    <property type="project" value="InterPro"/>
</dbReference>
<dbReference type="GO" id="GO:0009267">
    <property type="term" value="P:cellular response to starvation"/>
    <property type="evidence" value="ECO:0000270"/>
    <property type="project" value="MTBBASE"/>
</dbReference>
<dbReference type="InterPro" id="IPR010801">
    <property type="entry name" value="FAP"/>
</dbReference>
<dbReference type="Pfam" id="PF07174">
    <property type="entry name" value="FAP"/>
    <property type="match status" value="1"/>
</dbReference>
<evidence type="ECO:0000256" key="1">
    <source>
        <dbReference type="SAM" id="MobiDB-lite"/>
    </source>
</evidence>
<evidence type="ECO:0000269" key="2">
    <source>
    </source>
</evidence>
<evidence type="ECO:0000269" key="3">
    <source>
    </source>
</evidence>
<evidence type="ECO:0000269" key="4">
    <source>
    </source>
</evidence>
<evidence type="ECO:0000269" key="5">
    <source>
    </source>
</evidence>
<evidence type="ECO:0000269" key="6">
    <source>
    </source>
</evidence>
<evidence type="ECO:0000269" key="7">
    <source>
    </source>
</evidence>
<evidence type="ECO:0000303" key="8">
    <source>
    </source>
</evidence>
<evidence type="ECO:0000305" key="9"/>
<evidence type="ECO:0000305" key="10">
    <source>
    </source>
</evidence>
<evidence type="ECO:0007829" key="11">
    <source>
        <dbReference type="PDB" id="5ZX9"/>
    </source>
</evidence>